<protein>
    <recommendedName>
        <fullName evidence="1">CTP synthase</fullName>
        <ecNumber evidence="1">6.3.4.2</ecNumber>
    </recommendedName>
    <alternativeName>
        <fullName evidence="1">Cytidine 5'-triphosphate synthase</fullName>
    </alternativeName>
    <alternativeName>
        <fullName evidence="1">Cytidine triphosphate synthetase</fullName>
        <shortName evidence="1">CTP synthetase</shortName>
        <shortName evidence="1">CTPS</shortName>
    </alternativeName>
    <alternativeName>
        <fullName evidence="1">UTP--ammonia ligase</fullName>
    </alternativeName>
</protein>
<gene>
    <name evidence="1" type="primary">pyrG</name>
    <name type="ordered locus">gbs0106</name>
</gene>
<accession>Q8E7P8</accession>
<name>PYRG_STRA3</name>
<dbReference type="EC" id="6.3.4.2" evidence="1"/>
<dbReference type="EMBL" id="AL766843">
    <property type="protein sequence ID" value="CAD45751.1"/>
    <property type="molecule type" value="Genomic_DNA"/>
</dbReference>
<dbReference type="RefSeq" id="WP_000170432.1">
    <property type="nucleotide sequence ID" value="NC_004368.1"/>
</dbReference>
<dbReference type="SMR" id="Q8E7P8"/>
<dbReference type="KEGG" id="san:gbs0106"/>
<dbReference type="eggNOG" id="COG0504">
    <property type="taxonomic scope" value="Bacteria"/>
</dbReference>
<dbReference type="HOGENOM" id="CLU_011675_5_0_9"/>
<dbReference type="UniPathway" id="UPA00159">
    <property type="reaction ID" value="UER00277"/>
</dbReference>
<dbReference type="Proteomes" id="UP000000823">
    <property type="component" value="Chromosome"/>
</dbReference>
<dbReference type="GO" id="GO:0005829">
    <property type="term" value="C:cytosol"/>
    <property type="evidence" value="ECO:0007669"/>
    <property type="project" value="TreeGrafter"/>
</dbReference>
<dbReference type="GO" id="GO:0005524">
    <property type="term" value="F:ATP binding"/>
    <property type="evidence" value="ECO:0007669"/>
    <property type="project" value="UniProtKB-KW"/>
</dbReference>
<dbReference type="GO" id="GO:0003883">
    <property type="term" value="F:CTP synthase activity"/>
    <property type="evidence" value="ECO:0007669"/>
    <property type="project" value="UniProtKB-UniRule"/>
</dbReference>
<dbReference type="GO" id="GO:0004359">
    <property type="term" value="F:glutaminase activity"/>
    <property type="evidence" value="ECO:0007669"/>
    <property type="project" value="RHEA"/>
</dbReference>
<dbReference type="GO" id="GO:0042802">
    <property type="term" value="F:identical protein binding"/>
    <property type="evidence" value="ECO:0007669"/>
    <property type="project" value="TreeGrafter"/>
</dbReference>
<dbReference type="GO" id="GO:0046872">
    <property type="term" value="F:metal ion binding"/>
    <property type="evidence" value="ECO:0007669"/>
    <property type="project" value="UniProtKB-KW"/>
</dbReference>
<dbReference type="GO" id="GO:0044210">
    <property type="term" value="P:'de novo' CTP biosynthetic process"/>
    <property type="evidence" value="ECO:0007669"/>
    <property type="project" value="UniProtKB-UniRule"/>
</dbReference>
<dbReference type="GO" id="GO:0019856">
    <property type="term" value="P:pyrimidine nucleobase biosynthetic process"/>
    <property type="evidence" value="ECO:0007669"/>
    <property type="project" value="TreeGrafter"/>
</dbReference>
<dbReference type="CDD" id="cd03113">
    <property type="entry name" value="CTPS_N"/>
    <property type="match status" value="1"/>
</dbReference>
<dbReference type="CDD" id="cd01746">
    <property type="entry name" value="GATase1_CTP_Synthase"/>
    <property type="match status" value="1"/>
</dbReference>
<dbReference type="FunFam" id="3.40.50.300:FF:000009">
    <property type="entry name" value="CTP synthase"/>
    <property type="match status" value="1"/>
</dbReference>
<dbReference type="FunFam" id="3.40.50.880:FF:000002">
    <property type="entry name" value="CTP synthase"/>
    <property type="match status" value="1"/>
</dbReference>
<dbReference type="Gene3D" id="3.40.50.880">
    <property type="match status" value="1"/>
</dbReference>
<dbReference type="Gene3D" id="3.40.50.300">
    <property type="entry name" value="P-loop containing nucleotide triphosphate hydrolases"/>
    <property type="match status" value="1"/>
</dbReference>
<dbReference type="HAMAP" id="MF_01227">
    <property type="entry name" value="PyrG"/>
    <property type="match status" value="1"/>
</dbReference>
<dbReference type="InterPro" id="IPR029062">
    <property type="entry name" value="Class_I_gatase-like"/>
</dbReference>
<dbReference type="InterPro" id="IPR004468">
    <property type="entry name" value="CTP_synthase"/>
</dbReference>
<dbReference type="InterPro" id="IPR017456">
    <property type="entry name" value="CTP_synthase_N"/>
</dbReference>
<dbReference type="InterPro" id="IPR017926">
    <property type="entry name" value="GATASE"/>
</dbReference>
<dbReference type="InterPro" id="IPR033828">
    <property type="entry name" value="GATase1_CTP_Synthase"/>
</dbReference>
<dbReference type="InterPro" id="IPR027417">
    <property type="entry name" value="P-loop_NTPase"/>
</dbReference>
<dbReference type="NCBIfam" id="NF003792">
    <property type="entry name" value="PRK05380.1"/>
    <property type="match status" value="1"/>
</dbReference>
<dbReference type="NCBIfam" id="TIGR00337">
    <property type="entry name" value="PyrG"/>
    <property type="match status" value="1"/>
</dbReference>
<dbReference type="PANTHER" id="PTHR11550">
    <property type="entry name" value="CTP SYNTHASE"/>
    <property type="match status" value="1"/>
</dbReference>
<dbReference type="PANTHER" id="PTHR11550:SF0">
    <property type="entry name" value="CTP SYNTHASE-RELATED"/>
    <property type="match status" value="1"/>
</dbReference>
<dbReference type="Pfam" id="PF06418">
    <property type="entry name" value="CTP_synth_N"/>
    <property type="match status" value="1"/>
</dbReference>
<dbReference type="Pfam" id="PF00117">
    <property type="entry name" value="GATase"/>
    <property type="match status" value="1"/>
</dbReference>
<dbReference type="SUPFAM" id="SSF52317">
    <property type="entry name" value="Class I glutamine amidotransferase-like"/>
    <property type="match status" value="1"/>
</dbReference>
<dbReference type="SUPFAM" id="SSF52540">
    <property type="entry name" value="P-loop containing nucleoside triphosphate hydrolases"/>
    <property type="match status" value="1"/>
</dbReference>
<dbReference type="PROSITE" id="PS51273">
    <property type="entry name" value="GATASE_TYPE_1"/>
    <property type="match status" value="1"/>
</dbReference>
<sequence length="534" mass="59294">MTKYIFVTGGVVSSIGKGIVAASLGRLLKNRGLKVTIQKFDPYINIDPGTMSPYQHGEVYVTDDGAETDLDLGHYERFIDINLNKYSNVTTGKIYSEVLKKERRGEYLGATVQVIPHVTDALKEKIKRAATTTDSDVIITEVGGTVGDIESLPFLEALRQMKADVGSDNVMYIHTTLLPYLKAAGEMKTKPTQHSVKELRGLGIQPNMLVIRTEQPAGQSIKNKLAQFCDVAPEAVIESLDVDHIYQIPLNMQAQNMDQIVCDHLKLETPAADMTEWSAMVDKVMNLEKKVKIALVGKYVELPDAYLSVVEALKHSGYVNDVAIDLKWVNAAEVTEDNIKELVGDADGIIVPGGFGQRGSEGKIEAIRYARENDVPMLGVCLGMQLTCVEFARNVLKLHGANSAELDPKTPFPIIDIMRDQIDIEDMGGTLRLGLYPCKLKAGSRAAAAYNNQEVVQRRHRHRYEFNTKFREQFEAAGFVFSGVSPDNRLMEVVELPEKKFFVAAQYHPELQSRPNHAEELYTAFVTAAVENMK</sequence>
<organism>
    <name type="scientific">Streptococcus agalactiae serotype III (strain NEM316)</name>
    <dbReference type="NCBI Taxonomy" id="211110"/>
    <lineage>
        <taxon>Bacteria</taxon>
        <taxon>Bacillati</taxon>
        <taxon>Bacillota</taxon>
        <taxon>Bacilli</taxon>
        <taxon>Lactobacillales</taxon>
        <taxon>Streptococcaceae</taxon>
        <taxon>Streptococcus</taxon>
    </lineage>
</organism>
<keyword id="KW-0067">ATP-binding</keyword>
<keyword id="KW-0315">Glutamine amidotransferase</keyword>
<keyword id="KW-0436">Ligase</keyword>
<keyword id="KW-0460">Magnesium</keyword>
<keyword id="KW-0479">Metal-binding</keyword>
<keyword id="KW-0547">Nucleotide-binding</keyword>
<keyword id="KW-0665">Pyrimidine biosynthesis</keyword>
<feature type="chain" id="PRO_0000266228" description="CTP synthase">
    <location>
        <begin position="1"/>
        <end position="534"/>
    </location>
</feature>
<feature type="domain" description="Glutamine amidotransferase type-1" evidence="1">
    <location>
        <begin position="292"/>
        <end position="534"/>
    </location>
</feature>
<feature type="region of interest" description="Amidoligase domain" evidence="1">
    <location>
        <begin position="1"/>
        <end position="267"/>
    </location>
</feature>
<feature type="active site" description="Nucleophile; for glutamine hydrolysis" evidence="1">
    <location>
        <position position="381"/>
    </location>
</feature>
<feature type="active site" evidence="1">
    <location>
        <position position="508"/>
    </location>
</feature>
<feature type="active site" evidence="1">
    <location>
        <position position="510"/>
    </location>
</feature>
<feature type="binding site" evidence="1">
    <location>
        <position position="13"/>
    </location>
    <ligand>
        <name>CTP</name>
        <dbReference type="ChEBI" id="CHEBI:37563"/>
        <note>allosteric inhibitor</note>
    </ligand>
</feature>
<feature type="binding site" evidence="1">
    <location>
        <position position="13"/>
    </location>
    <ligand>
        <name>UTP</name>
        <dbReference type="ChEBI" id="CHEBI:46398"/>
    </ligand>
</feature>
<feature type="binding site" evidence="1">
    <location>
        <begin position="14"/>
        <end position="19"/>
    </location>
    <ligand>
        <name>ATP</name>
        <dbReference type="ChEBI" id="CHEBI:30616"/>
    </ligand>
</feature>
<feature type="binding site" evidence="1">
    <location>
        <position position="54"/>
    </location>
    <ligand>
        <name>L-glutamine</name>
        <dbReference type="ChEBI" id="CHEBI:58359"/>
    </ligand>
</feature>
<feature type="binding site" evidence="1">
    <location>
        <position position="71"/>
    </location>
    <ligand>
        <name>ATP</name>
        <dbReference type="ChEBI" id="CHEBI:30616"/>
    </ligand>
</feature>
<feature type="binding site" evidence="1">
    <location>
        <position position="71"/>
    </location>
    <ligand>
        <name>Mg(2+)</name>
        <dbReference type="ChEBI" id="CHEBI:18420"/>
    </ligand>
</feature>
<feature type="binding site" evidence="1">
    <location>
        <position position="141"/>
    </location>
    <ligand>
        <name>Mg(2+)</name>
        <dbReference type="ChEBI" id="CHEBI:18420"/>
    </ligand>
</feature>
<feature type="binding site" evidence="1">
    <location>
        <begin position="148"/>
        <end position="150"/>
    </location>
    <ligand>
        <name>CTP</name>
        <dbReference type="ChEBI" id="CHEBI:37563"/>
        <note>allosteric inhibitor</note>
    </ligand>
</feature>
<feature type="binding site" evidence="1">
    <location>
        <begin position="188"/>
        <end position="193"/>
    </location>
    <ligand>
        <name>CTP</name>
        <dbReference type="ChEBI" id="CHEBI:37563"/>
        <note>allosteric inhibitor</note>
    </ligand>
</feature>
<feature type="binding site" evidence="1">
    <location>
        <begin position="188"/>
        <end position="193"/>
    </location>
    <ligand>
        <name>UTP</name>
        <dbReference type="ChEBI" id="CHEBI:46398"/>
    </ligand>
</feature>
<feature type="binding site" evidence="1">
    <location>
        <position position="224"/>
    </location>
    <ligand>
        <name>CTP</name>
        <dbReference type="ChEBI" id="CHEBI:37563"/>
        <note>allosteric inhibitor</note>
    </ligand>
</feature>
<feature type="binding site" evidence="1">
    <location>
        <position position="224"/>
    </location>
    <ligand>
        <name>UTP</name>
        <dbReference type="ChEBI" id="CHEBI:46398"/>
    </ligand>
</feature>
<feature type="binding site" evidence="1">
    <location>
        <position position="354"/>
    </location>
    <ligand>
        <name>L-glutamine</name>
        <dbReference type="ChEBI" id="CHEBI:58359"/>
    </ligand>
</feature>
<feature type="binding site" evidence="1">
    <location>
        <begin position="382"/>
        <end position="385"/>
    </location>
    <ligand>
        <name>L-glutamine</name>
        <dbReference type="ChEBI" id="CHEBI:58359"/>
    </ligand>
</feature>
<feature type="binding site" evidence="1">
    <location>
        <position position="405"/>
    </location>
    <ligand>
        <name>L-glutamine</name>
        <dbReference type="ChEBI" id="CHEBI:58359"/>
    </ligand>
</feature>
<feature type="binding site" evidence="1">
    <location>
        <position position="463"/>
    </location>
    <ligand>
        <name>L-glutamine</name>
        <dbReference type="ChEBI" id="CHEBI:58359"/>
    </ligand>
</feature>
<reference key="1">
    <citation type="journal article" date="2002" name="Mol. Microbiol.">
        <title>Genome sequence of Streptococcus agalactiae, a pathogen causing invasive neonatal disease.</title>
        <authorList>
            <person name="Glaser P."/>
            <person name="Rusniok C."/>
            <person name="Buchrieser C."/>
            <person name="Chevalier F."/>
            <person name="Frangeul L."/>
            <person name="Msadek T."/>
            <person name="Zouine M."/>
            <person name="Couve E."/>
            <person name="Lalioui L."/>
            <person name="Poyart C."/>
            <person name="Trieu-Cuot P."/>
            <person name="Kunst F."/>
        </authorList>
    </citation>
    <scope>NUCLEOTIDE SEQUENCE [LARGE SCALE GENOMIC DNA]</scope>
    <source>
        <strain>NEM316</strain>
    </source>
</reference>
<proteinExistence type="inferred from homology"/>
<comment type="function">
    <text evidence="1">Catalyzes the ATP-dependent amination of UTP to CTP with either L-glutamine or ammonia as the source of nitrogen. Regulates intracellular CTP levels through interactions with the four ribonucleotide triphosphates.</text>
</comment>
<comment type="catalytic activity">
    <reaction evidence="1">
        <text>UTP + L-glutamine + ATP + H2O = CTP + L-glutamate + ADP + phosphate + 2 H(+)</text>
        <dbReference type="Rhea" id="RHEA:26426"/>
        <dbReference type="ChEBI" id="CHEBI:15377"/>
        <dbReference type="ChEBI" id="CHEBI:15378"/>
        <dbReference type="ChEBI" id="CHEBI:29985"/>
        <dbReference type="ChEBI" id="CHEBI:30616"/>
        <dbReference type="ChEBI" id="CHEBI:37563"/>
        <dbReference type="ChEBI" id="CHEBI:43474"/>
        <dbReference type="ChEBI" id="CHEBI:46398"/>
        <dbReference type="ChEBI" id="CHEBI:58359"/>
        <dbReference type="ChEBI" id="CHEBI:456216"/>
        <dbReference type="EC" id="6.3.4.2"/>
    </reaction>
</comment>
<comment type="catalytic activity">
    <reaction evidence="1">
        <text>L-glutamine + H2O = L-glutamate + NH4(+)</text>
        <dbReference type="Rhea" id="RHEA:15889"/>
        <dbReference type="ChEBI" id="CHEBI:15377"/>
        <dbReference type="ChEBI" id="CHEBI:28938"/>
        <dbReference type="ChEBI" id="CHEBI:29985"/>
        <dbReference type="ChEBI" id="CHEBI:58359"/>
    </reaction>
</comment>
<comment type="catalytic activity">
    <reaction evidence="1">
        <text>UTP + NH4(+) + ATP = CTP + ADP + phosphate + 2 H(+)</text>
        <dbReference type="Rhea" id="RHEA:16597"/>
        <dbReference type="ChEBI" id="CHEBI:15378"/>
        <dbReference type="ChEBI" id="CHEBI:28938"/>
        <dbReference type="ChEBI" id="CHEBI:30616"/>
        <dbReference type="ChEBI" id="CHEBI:37563"/>
        <dbReference type="ChEBI" id="CHEBI:43474"/>
        <dbReference type="ChEBI" id="CHEBI:46398"/>
        <dbReference type="ChEBI" id="CHEBI:456216"/>
    </reaction>
</comment>
<comment type="activity regulation">
    <text evidence="1">Allosterically activated by GTP, when glutamine is the substrate; GTP has no effect on the reaction when ammonia is the substrate. The allosteric effector GTP functions by stabilizing the protein conformation that binds the tetrahedral intermediate(s) formed during glutamine hydrolysis. Inhibited by the product CTP, via allosteric rather than competitive inhibition.</text>
</comment>
<comment type="pathway">
    <text evidence="1">Pyrimidine metabolism; CTP biosynthesis via de novo pathway; CTP from UDP: step 2/2.</text>
</comment>
<comment type="subunit">
    <text evidence="1">Homotetramer.</text>
</comment>
<comment type="miscellaneous">
    <text evidence="1">CTPSs have evolved a hybrid strategy for distinguishing between UTP and CTP. The overlapping regions of the product feedback inhibitory and substrate sites recognize a common feature in both compounds, the triphosphate moiety. To differentiate isosteric substrate and product pyrimidine rings, an additional pocket far from the expected kinase/ligase catalytic site, specifically recognizes the cytosine and ribose portions of the product inhibitor.</text>
</comment>
<comment type="similarity">
    <text evidence="1">Belongs to the CTP synthase family.</text>
</comment>
<evidence type="ECO:0000255" key="1">
    <source>
        <dbReference type="HAMAP-Rule" id="MF_01227"/>
    </source>
</evidence>